<protein>
    <recommendedName>
        <fullName evidence="1">Uridylate kinase</fullName>
        <shortName evidence="1">UK</shortName>
        <ecNumber evidence="1">2.7.4.22</ecNumber>
    </recommendedName>
    <alternativeName>
        <fullName evidence="1">Uridine monophosphate kinase</fullName>
        <shortName evidence="1">UMP kinase</shortName>
        <shortName evidence="1">UMPK</shortName>
    </alternativeName>
</protein>
<keyword id="KW-0021">Allosteric enzyme</keyword>
<keyword id="KW-0067">ATP-binding</keyword>
<keyword id="KW-0963">Cytoplasm</keyword>
<keyword id="KW-0418">Kinase</keyword>
<keyword id="KW-0547">Nucleotide-binding</keyword>
<keyword id="KW-0665">Pyrimidine biosynthesis</keyword>
<keyword id="KW-1185">Reference proteome</keyword>
<keyword id="KW-0808">Transferase</keyword>
<comment type="function">
    <text evidence="1">Catalyzes the reversible phosphorylation of UMP to UDP.</text>
</comment>
<comment type="catalytic activity">
    <reaction evidence="1">
        <text>UMP + ATP = UDP + ADP</text>
        <dbReference type="Rhea" id="RHEA:24400"/>
        <dbReference type="ChEBI" id="CHEBI:30616"/>
        <dbReference type="ChEBI" id="CHEBI:57865"/>
        <dbReference type="ChEBI" id="CHEBI:58223"/>
        <dbReference type="ChEBI" id="CHEBI:456216"/>
        <dbReference type="EC" id="2.7.4.22"/>
    </reaction>
</comment>
<comment type="activity regulation">
    <text evidence="1">Allosterically activated by GTP. Inhibited by UTP.</text>
</comment>
<comment type="pathway">
    <text evidence="1">Pyrimidine metabolism; CTP biosynthesis via de novo pathway; UDP from UMP (UMPK route): step 1/1.</text>
</comment>
<comment type="subunit">
    <text evidence="1">Homohexamer.</text>
</comment>
<comment type="subcellular location">
    <subcellularLocation>
        <location evidence="1">Cytoplasm</location>
    </subcellularLocation>
</comment>
<comment type="similarity">
    <text evidence="1">Belongs to the UMP kinase family.</text>
</comment>
<gene>
    <name evidence="1" type="primary">pyrH</name>
    <name type="synonym">smbA</name>
    <name type="ordered locus">BH2425</name>
</gene>
<sequence>MAKYKRVVLKLSGEALAGEQGYGIDPEVIQSIASQIKEIVELDVEVAVVVGGGNIWRGMAGSAKGMDRATADYMGMLATVMNSLALQDSLENLDVQSRVQTSIEMRQVAEPYIRRRAIRHLEKKRVVIFAAGTGNPYFSTDTTAALRAAEIEAEVILMAKNKVDGVYNAEPSVDVNAKKYTSISYLDVLKEGLAVMDSTASSLCMDNNIPLIVFSIMEEGNIKKAVLGEEIGTVVRGSN</sequence>
<dbReference type="EC" id="2.7.4.22" evidence="1"/>
<dbReference type="EMBL" id="BA000004">
    <property type="protein sequence ID" value="BAB06144.1"/>
    <property type="molecule type" value="Genomic_DNA"/>
</dbReference>
<dbReference type="PIR" id="A83953">
    <property type="entry name" value="A83953"/>
</dbReference>
<dbReference type="RefSeq" id="WP_010898578.1">
    <property type="nucleotide sequence ID" value="NC_002570.2"/>
</dbReference>
<dbReference type="SMR" id="Q9KA65"/>
<dbReference type="STRING" id="272558.gene:10728323"/>
<dbReference type="KEGG" id="bha:BH2425"/>
<dbReference type="eggNOG" id="COG0528">
    <property type="taxonomic scope" value="Bacteria"/>
</dbReference>
<dbReference type="HOGENOM" id="CLU_033861_0_0_9"/>
<dbReference type="OrthoDB" id="9807458at2"/>
<dbReference type="UniPathway" id="UPA00159">
    <property type="reaction ID" value="UER00275"/>
</dbReference>
<dbReference type="Proteomes" id="UP000001258">
    <property type="component" value="Chromosome"/>
</dbReference>
<dbReference type="GO" id="GO:0005737">
    <property type="term" value="C:cytoplasm"/>
    <property type="evidence" value="ECO:0007669"/>
    <property type="project" value="UniProtKB-SubCell"/>
</dbReference>
<dbReference type="GO" id="GO:0005524">
    <property type="term" value="F:ATP binding"/>
    <property type="evidence" value="ECO:0007669"/>
    <property type="project" value="UniProtKB-KW"/>
</dbReference>
<dbReference type="GO" id="GO:0033862">
    <property type="term" value="F:UMP kinase activity"/>
    <property type="evidence" value="ECO:0007669"/>
    <property type="project" value="UniProtKB-EC"/>
</dbReference>
<dbReference type="GO" id="GO:0044210">
    <property type="term" value="P:'de novo' CTP biosynthetic process"/>
    <property type="evidence" value="ECO:0007669"/>
    <property type="project" value="UniProtKB-UniRule"/>
</dbReference>
<dbReference type="GO" id="GO:0006225">
    <property type="term" value="P:UDP biosynthetic process"/>
    <property type="evidence" value="ECO:0007669"/>
    <property type="project" value="TreeGrafter"/>
</dbReference>
<dbReference type="CDD" id="cd04254">
    <property type="entry name" value="AAK_UMPK-PyrH-Ec"/>
    <property type="match status" value="1"/>
</dbReference>
<dbReference type="FunFam" id="3.40.1160.10:FF:000001">
    <property type="entry name" value="Uridylate kinase"/>
    <property type="match status" value="1"/>
</dbReference>
<dbReference type="Gene3D" id="3.40.1160.10">
    <property type="entry name" value="Acetylglutamate kinase-like"/>
    <property type="match status" value="1"/>
</dbReference>
<dbReference type="HAMAP" id="MF_01220_B">
    <property type="entry name" value="PyrH_B"/>
    <property type="match status" value="1"/>
</dbReference>
<dbReference type="InterPro" id="IPR036393">
    <property type="entry name" value="AceGlu_kinase-like_sf"/>
</dbReference>
<dbReference type="InterPro" id="IPR001048">
    <property type="entry name" value="Asp/Glu/Uridylate_kinase"/>
</dbReference>
<dbReference type="InterPro" id="IPR011817">
    <property type="entry name" value="Uridylate_kinase"/>
</dbReference>
<dbReference type="InterPro" id="IPR015963">
    <property type="entry name" value="Uridylate_kinase_bac"/>
</dbReference>
<dbReference type="NCBIfam" id="TIGR02075">
    <property type="entry name" value="pyrH_bact"/>
    <property type="match status" value="1"/>
</dbReference>
<dbReference type="PANTHER" id="PTHR42833">
    <property type="entry name" value="URIDYLATE KINASE"/>
    <property type="match status" value="1"/>
</dbReference>
<dbReference type="PANTHER" id="PTHR42833:SF4">
    <property type="entry name" value="URIDYLATE KINASE PUMPKIN, CHLOROPLASTIC"/>
    <property type="match status" value="1"/>
</dbReference>
<dbReference type="Pfam" id="PF00696">
    <property type="entry name" value="AA_kinase"/>
    <property type="match status" value="1"/>
</dbReference>
<dbReference type="PIRSF" id="PIRSF005650">
    <property type="entry name" value="Uridylate_kin"/>
    <property type="match status" value="1"/>
</dbReference>
<dbReference type="SUPFAM" id="SSF53633">
    <property type="entry name" value="Carbamate kinase-like"/>
    <property type="match status" value="1"/>
</dbReference>
<reference key="1">
    <citation type="journal article" date="2000" name="Nucleic Acids Res.">
        <title>Complete genome sequence of the alkaliphilic bacterium Bacillus halodurans and genomic sequence comparison with Bacillus subtilis.</title>
        <authorList>
            <person name="Takami H."/>
            <person name="Nakasone K."/>
            <person name="Takaki Y."/>
            <person name="Maeno G."/>
            <person name="Sasaki R."/>
            <person name="Masui N."/>
            <person name="Fuji F."/>
            <person name="Hirama C."/>
            <person name="Nakamura Y."/>
            <person name="Ogasawara N."/>
            <person name="Kuhara S."/>
            <person name="Horikoshi K."/>
        </authorList>
    </citation>
    <scope>NUCLEOTIDE SEQUENCE [LARGE SCALE GENOMIC DNA]</scope>
    <source>
        <strain>ATCC BAA-125 / DSM 18197 / FERM 7344 / JCM 9153 / C-125</strain>
    </source>
</reference>
<feature type="chain" id="PRO_0000143824" description="Uridylate kinase">
    <location>
        <begin position="1"/>
        <end position="239"/>
    </location>
</feature>
<feature type="region of interest" description="Involved in allosteric activation by GTP" evidence="1">
    <location>
        <begin position="18"/>
        <end position="23"/>
    </location>
</feature>
<feature type="binding site" evidence="1">
    <location>
        <begin position="10"/>
        <end position="13"/>
    </location>
    <ligand>
        <name>ATP</name>
        <dbReference type="ChEBI" id="CHEBI:30616"/>
    </ligand>
</feature>
<feature type="binding site" evidence="1">
    <location>
        <position position="52"/>
    </location>
    <ligand>
        <name>UMP</name>
        <dbReference type="ChEBI" id="CHEBI:57865"/>
    </ligand>
</feature>
<feature type="binding site" evidence="1">
    <location>
        <position position="53"/>
    </location>
    <ligand>
        <name>ATP</name>
        <dbReference type="ChEBI" id="CHEBI:30616"/>
    </ligand>
</feature>
<feature type="binding site" evidence="1">
    <location>
        <position position="57"/>
    </location>
    <ligand>
        <name>ATP</name>
        <dbReference type="ChEBI" id="CHEBI:30616"/>
    </ligand>
</feature>
<feature type="binding site" evidence="1">
    <location>
        <position position="72"/>
    </location>
    <ligand>
        <name>UMP</name>
        <dbReference type="ChEBI" id="CHEBI:57865"/>
    </ligand>
</feature>
<feature type="binding site" evidence="1">
    <location>
        <begin position="133"/>
        <end position="140"/>
    </location>
    <ligand>
        <name>UMP</name>
        <dbReference type="ChEBI" id="CHEBI:57865"/>
    </ligand>
</feature>
<feature type="binding site" evidence="1">
    <location>
        <position position="161"/>
    </location>
    <ligand>
        <name>ATP</name>
        <dbReference type="ChEBI" id="CHEBI:30616"/>
    </ligand>
</feature>
<feature type="binding site" evidence="1">
    <location>
        <position position="167"/>
    </location>
    <ligand>
        <name>ATP</name>
        <dbReference type="ChEBI" id="CHEBI:30616"/>
    </ligand>
</feature>
<feature type="binding site" evidence="1">
    <location>
        <position position="170"/>
    </location>
    <ligand>
        <name>ATP</name>
        <dbReference type="ChEBI" id="CHEBI:30616"/>
    </ligand>
</feature>
<name>PYRH_HALH5</name>
<evidence type="ECO:0000255" key="1">
    <source>
        <dbReference type="HAMAP-Rule" id="MF_01220"/>
    </source>
</evidence>
<proteinExistence type="inferred from homology"/>
<accession>Q9KA65</accession>
<organism>
    <name type="scientific">Halalkalibacterium halodurans (strain ATCC BAA-125 / DSM 18197 / FERM 7344 / JCM 9153 / C-125)</name>
    <name type="common">Bacillus halodurans</name>
    <dbReference type="NCBI Taxonomy" id="272558"/>
    <lineage>
        <taxon>Bacteria</taxon>
        <taxon>Bacillati</taxon>
        <taxon>Bacillota</taxon>
        <taxon>Bacilli</taxon>
        <taxon>Bacillales</taxon>
        <taxon>Bacillaceae</taxon>
        <taxon>Halalkalibacterium (ex Joshi et al. 2022)</taxon>
    </lineage>
</organism>